<gene>
    <name evidence="1" type="primary">hslO</name>
    <name type="ordered locus">PCC7424_5185</name>
</gene>
<name>HSLO_GLOC7</name>
<keyword id="KW-0143">Chaperone</keyword>
<keyword id="KW-0963">Cytoplasm</keyword>
<keyword id="KW-1015">Disulfide bond</keyword>
<keyword id="KW-0676">Redox-active center</keyword>
<keyword id="KW-1185">Reference proteome</keyword>
<keyword id="KW-0862">Zinc</keyword>
<reference key="1">
    <citation type="journal article" date="2011" name="MBio">
        <title>Novel metabolic attributes of the genus Cyanothece, comprising a group of unicellular nitrogen-fixing Cyanobacteria.</title>
        <authorList>
            <person name="Bandyopadhyay A."/>
            <person name="Elvitigala T."/>
            <person name="Welsh E."/>
            <person name="Stockel J."/>
            <person name="Liberton M."/>
            <person name="Min H."/>
            <person name="Sherman L.A."/>
            <person name="Pakrasi H.B."/>
        </authorList>
    </citation>
    <scope>NUCLEOTIDE SEQUENCE [LARGE SCALE GENOMIC DNA]</scope>
    <source>
        <strain>PCC 7424</strain>
    </source>
</reference>
<accession>B7KI47</accession>
<proteinExistence type="inferred from homology"/>
<sequence length="299" mass="31765">MADQLIRATAADGGIRAVGVISTRLTEEARVRHKLSYVATAALGRAMTSGLLLASSMKREGSRVNIRIKGDGPLGGLLVDAGLDGTVRGYVGNPSVELPPNAKGKLDVGGAVGRDGYLYVVRDVGYGYPYSSTVELVSGEVGDDVAHYLITSEQTPSALLVGVFVDVTGVIASGGILLQVMPKAARDEELVSTLESRVGQLTGFTPLLRAGKTLPEIFEQLLGDLGLVILPEIQMVRFDCHCSFERVLGALKMLGEAELQDMIEKDDGAEATCQFCGEVYQASREHLTQLIEDLRAQSG</sequence>
<evidence type="ECO:0000255" key="1">
    <source>
        <dbReference type="HAMAP-Rule" id="MF_00117"/>
    </source>
</evidence>
<comment type="function">
    <text evidence="1">Redox regulated molecular chaperone. Protects both thermally unfolding and oxidatively damaged proteins from irreversible aggregation. Plays an important role in the bacterial defense system toward oxidative stress.</text>
</comment>
<comment type="subcellular location">
    <subcellularLocation>
        <location evidence="1">Cytoplasm</location>
    </subcellularLocation>
</comment>
<comment type="PTM">
    <text evidence="1">Under oxidizing conditions two disulfide bonds are formed involving the reactive cysteines. Under reducing conditions zinc is bound to the reactive cysteines and the protein is inactive.</text>
</comment>
<comment type="similarity">
    <text evidence="1">Belongs to the HSP33 family.</text>
</comment>
<organism>
    <name type="scientific">Gloeothece citriformis (strain PCC 7424)</name>
    <name type="common">Cyanothece sp. (strain PCC 7424)</name>
    <dbReference type="NCBI Taxonomy" id="65393"/>
    <lineage>
        <taxon>Bacteria</taxon>
        <taxon>Bacillati</taxon>
        <taxon>Cyanobacteriota</taxon>
        <taxon>Cyanophyceae</taxon>
        <taxon>Oscillatoriophycideae</taxon>
        <taxon>Chroococcales</taxon>
        <taxon>Aphanothecaceae</taxon>
        <taxon>Gloeothece</taxon>
        <taxon>Gloeothece citriformis</taxon>
    </lineage>
</organism>
<dbReference type="EMBL" id="CP001291">
    <property type="protein sequence ID" value="ACK73534.1"/>
    <property type="molecule type" value="Genomic_DNA"/>
</dbReference>
<dbReference type="RefSeq" id="WP_015957113.1">
    <property type="nucleotide sequence ID" value="NC_011729.1"/>
</dbReference>
<dbReference type="SMR" id="B7KI47"/>
<dbReference type="STRING" id="65393.PCC7424_5185"/>
<dbReference type="KEGG" id="cyc:PCC7424_5185"/>
<dbReference type="eggNOG" id="COG1281">
    <property type="taxonomic scope" value="Bacteria"/>
</dbReference>
<dbReference type="HOGENOM" id="CLU_054493_1_0_3"/>
<dbReference type="OrthoDB" id="9776534at2"/>
<dbReference type="Proteomes" id="UP000002384">
    <property type="component" value="Chromosome"/>
</dbReference>
<dbReference type="GO" id="GO:0005737">
    <property type="term" value="C:cytoplasm"/>
    <property type="evidence" value="ECO:0007669"/>
    <property type="project" value="UniProtKB-SubCell"/>
</dbReference>
<dbReference type="GO" id="GO:0044183">
    <property type="term" value="F:protein folding chaperone"/>
    <property type="evidence" value="ECO:0007669"/>
    <property type="project" value="TreeGrafter"/>
</dbReference>
<dbReference type="GO" id="GO:0051082">
    <property type="term" value="F:unfolded protein binding"/>
    <property type="evidence" value="ECO:0007669"/>
    <property type="project" value="UniProtKB-UniRule"/>
</dbReference>
<dbReference type="GO" id="GO:0042026">
    <property type="term" value="P:protein refolding"/>
    <property type="evidence" value="ECO:0007669"/>
    <property type="project" value="TreeGrafter"/>
</dbReference>
<dbReference type="CDD" id="cd00498">
    <property type="entry name" value="Hsp33"/>
    <property type="match status" value="1"/>
</dbReference>
<dbReference type="Gene3D" id="3.55.30.10">
    <property type="entry name" value="Hsp33 domain"/>
    <property type="match status" value="1"/>
</dbReference>
<dbReference type="Gene3D" id="3.90.1280.10">
    <property type="entry name" value="HSP33 redox switch-like"/>
    <property type="match status" value="1"/>
</dbReference>
<dbReference type="HAMAP" id="MF_00117">
    <property type="entry name" value="HslO"/>
    <property type="match status" value="1"/>
</dbReference>
<dbReference type="InterPro" id="IPR000397">
    <property type="entry name" value="Heat_shock_Hsp33"/>
</dbReference>
<dbReference type="InterPro" id="IPR016154">
    <property type="entry name" value="Heat_shock_Hsp33_C"/>
</dbReference>
<dbReference type="InterPro" id="IPR016153">
    <property type="entry name" value="Heat_shock_Hsp33_N"/>
</dbReference>
<dbReference type="NCBIfam" id="NF001033">
    <property type="entry name" value="PRK00114.1"/>
    <property type="match status" value="1"/>
</dbReference>
<dbReference type="PANTHER" id="PTHR30111">
    <property type="entry name" value="33 KDA CHAPERONIN"/>
    <property type="match status" value="1"/>
</dbReference>
<dbReference type="PANTHER" id="PTHR30111:SF1">
    <property type="entry name" value="33 KDA CHAPERONIN"/>
    <property type="match status" value="1"/>
</dbReference>
<dbReference type="Pfam" id="PF01430">
    <property type="entry name" value="HSP33"/>
    <property type="match status" value="1"/>
</dbReference>
<dbReference type="PIRSF" id="PIRSF005261">
    <property type="entry name" value="Heat_shock_Hsp33"/>
    <property type="match status" value="1"/>
</dbReference>
<dbReference type="SUPFAM" id="SSF64397">
    <property type="entry name" value="Hsp33 domain"/>
    <property type="match status" value="1"/>
</dbReference>
<dbReference type="SUPFAM" id="SSF118352">
    <property type="entry name" value="HSP33 redox switch-like"/>
    <property type="match status" value="1"/>
</dbReference>
<feature type="chain" id="PRO_1000190456" description="33 kDa chaperonin">
    <location>
        <begin position="1"/>
        <end position="299"/>
    </location>
</feature>
<feature type="disulfide bond" description="Redox-active" evidence="1">
    <location>
        <begin position="240"/>
        <end position="242"/>
    </location>
</feature>
<feature type="disulfide bond" description="Redox-active" evidence="1">
    <location>
        <begin position="273"/>
        <end position="276"/>
    </location>
</feature>
<protein>
    <recommendedName>
        <fullName evidence="1">33 kDa chaperonin</fullName>
    </recommendedName>
    <alternativeName>
        <fullName evidence="1">Heat shock protein 33 homolog</fullName>
        <shortName evidence="1">HSP33</shortName>
    </alternativeName>
</protein>